<proteinExistence type="inferred from homology"/>
<reference key="1">
    <citation type="journal article" date="2008" name="PLoS ONE">
        <title>Environmental adaptation: genomic analysis of the piezotolerant and psychrotolerant deep-sea iron reducing bacterium Shewanella piezotolerans WP3.</title>
        <authorList>
            <person name="Wang F."/>
            <person name="Wang J."/>
            <person name="Jian H."/>
            <person name="Zhang B."/>
            <person name="Li S."/>
            <person name="Wang F."/>
            <person name="Zeng X."/>
            <person name="Gao L."/>
            <person name="Bartlett D.H."/>
            <person name="Yu J."/>
            <person name="Hu S."/>
            <person name="Xiao X."/>
        </authorList>
    </citation>
    <scope>NUCLEOTIDE SEQUENCE [LARGE SCALE GENOMIC DNA]</scope>
    <source>
        <strain>WP3 / JCM 13877</strain>
    </source>
</reference>
<evidence type="ECO:0000250" key="1"/>
<evidence type="ECO:0000255" key="2">
    <source>
        <dbReference type="HAMAP-Rule" id="MF_00100"/>
    </source>
</evidence>
<evidence type="ECO:0000256" key="3">
    <source>
        <dbReference type="SAM" id="MobiDB-lite"/>
    </source>
</evidence>
<accession>B8CKH3</accession>
<organism>
    <name type="scientific">Shewanella piezotolerans (strain WP3 / JCM 13877)</name>
    <dbReference type="NCBI Taxonomy" id="225849"/>
    <lineage>
        <taxon>Bacteria</taxon>
        <taxon>Pseudomonadati</taxon>
        <taxon>Pseudomonadota</taxon>
        <taxon>Gammaproteobacteria</taxon>
        <taxon>Alteromonadales</taxon>
        <taxon>Shewanellaceae</taxon>
        <taxon>Shewanella</taxon>
    </lineage>
</organism>
<dbReference type="EMBL" id="CP000472">
    <property type="protein sequence ID" value="ACJ28012.1"/>
    <property type="molecule type" value="Genomic_DNA"/>
</dbReference>
<dbReference type="RefSeq" id="WP_020911390.1">
    <property type="nucleotide sequence ID" value="NC_011566.1"/>
</dbReference>
<dbReference type="SMR" id="B8CKH3"/>
<dbReference type="STRING" id="225849.swp_1218"/>
<dbReference type="KEGG" id="swp:swp_1218"/>
<dbReference type="eggNOG" id="COG0532">
    <property type="taxonomic scope" value="Bacteria"/>
</dbReference>
<dbReference type="HOGENOM" id="CLU_006301_6_3_6"/>
<dbReference type="OrthoDB" id="9811804at2"/>
<dbReference type="Proteomes" id="UP000000753">
    <property type="component" value="Chromosome"/>
</dbReference>
<dbReference type="GO" id="GO:0005829">
    <property type="term" value="C:cytosol"/>
    <property type="evidence" value="ECO:0007669"/>
    <property type="project" value="TreeGrafter"/>
</dbReference>
<dbReference type="GO" id="GO:0005525">
    <property type="term" value="F:GTP binding"/>
    <property type="evidence" value="ECO:0007669"/>
    <property type="project" value="UniProtKB-KW"/>
</dbReference>
<dbReference type="GO" id="GO:0003924">
    <property type="term" value="F:GTPase activity"/>
    <property type="evidence" value="ECO:0007669"/>
    <property type="project" value="UniProtKB-UniRule"/>
</dbReference>
<dbReference type="GO" id="GO:0097216">
    <property type="term" value="F:guanosine tetraphosphate binding"/>
    <property type="evidence" value="ECO:0007669"/>
    <property type="project" value="UniProtKB-ARBA"/>
</dbReference>
<dbReference type="GO" id="GO:0003743">
    <property type="term" value="F:translation initiation factor activity"/>
    <property type="evidence" value="ECO:0007669"/>
    <property type="project" value="UniProtKB-UniRule"/>
</dbReference>
<dbReference type="CDD" id="cd01887">
    <property type="entry name" value="IF2_eIF5B"/>
    <property type="match status" value="1"/>
</dbReference>
<dbReference type="CDD" id="cd03702">
    <property type="entry name" value="IF2_mtIF2_II"/>
    <property type="match status" value="1"/>
</dbReference>
<dbReference type="CDD" id="cd03692">
    <property type="entry name" value="mtIF2_IVc"/>
    <property type="match status" value="1"/>
</dbReference>
<dbReference type="FunFam" id="2.40.30.10:FF:000007">
    <property type="entry name" value="Translation initiation factor IF-2"/>
    <property type="match status" value="1"/>
</dbReference>
<dbReference type="FunFam" id="2.40.30.10:FF:000008">
    <property type="entry name" value="Translation initiation factor IF-2"/>
    <property type="match status" value="1"/>
</dbReference>
<dbReference type="FunFam" id="3.40.50.10050:FF:000001">
    <property type="entry name" value="Translation initiation factor IF-2"/>
    <property type="match status" value="1"/>
</dbReference>
<dbReference type="FunFam" id="3.40.50.300:FF:000019">
    <property type="entry name" value="Translation initiation factor IF-2"/>
    <property type="match status" value="1"/>
</dbReference>
<dbReference type="Gene3D" id="3.40.50.300">
    <property type="entry name" value="P-loop containing nucleotide triphosphate hydrolases"/>
    <property type="match status" value="1"/>
</dbReference>
<dbReference type="Gene3D" id="3.30.56.50">
    <property type="entry name" value="Putative DNA-binding domain, N-terminal subdomain of bacterial translation initiation factor IF2"/>
    <property type="match status" value="1"/>
</dbReference>
<dbReference type="Gene3D" id="2.40.30.10">
    <property type="entry name" value="Translation factors"/>
    <property type="match status" value="2"/>
</dbReference>
<dbReference type="Gene3D" id="3.40.50.10050">
    <property type="entry name" value="Translation initiation factor IF- 2, domain 3"/>
    <property type="match status" value="1"/>
</dbReference>
<dbReference type="HAMAP" id="MF_00100_B">
    <property type="entry name" value="IF_2_B"/>
    <property type="match status" value="1"/>
</dbReference>
<dbReference type="InterPro" id="IPR009061">
    <property type="entry name" value="DNA-bd_dom_put_sf"/>
</dbReference>
<dbReference type="InterPro" id="IPR053905">
    <property type="entry name" value="EF-G-like_DII"/>
</dbReference>
<dbReference type="InterPro" id="IPR004161">
    <property type="entry name" value="EFTu-like_2"/>
</dbReference>
<dbReference type="InterPro" id="IPR013575">
    <property type="entry name" value="IF2_assoc_dom_bac"/>
</dbReference>
<dbReference type="InterPro" id="IPR044145">
    <property type="entry name" value="IF2_II"/>
</dbReference>
<dbReference type="InterPro" id="IPR006847">
    <property type="entry name" value="IF2_N"/>
</dbReference>
<dbReference type="InterPro" id="IPR027417">
    <property type="entry name" value="P-loop_NTPase"/>
</dbReference>
<dbReference type="InterPro" id="IPR005225">
    <property type="entry name" value="Small_GTP-bd"/>
</dbReference>
<dbReference type="InterPro" id="IPR000795">
    <property type="entry name" value="T_Tr_GTP-bd_dom"/>
</dbReference>
<dbReference type="InterPro" id="IPR000178">
    <property type="entry name" value="TF_IF2_bacterial-like"/>
</dbReference>
<dbReference type="InterPro" id="IPR015760">
    <property type="entry name" value="TIF_IF2"/>
</dbReference>
<dbReference type="InterPro" id="IPR023115">
    <property type="entry name" value="TIF_IF2_dom3"/>
</dbReference>
<dbReference type="InterPro" id="IPR036925">
    <property type="entry name" value="TIF_IF2_dom3_sf"/>
</dbReference>
<dbReference type="InterPro" id="IPR009000">
    <property type="entry name" value="Transl_B-barrel_sf"/>
</dbReference>
<dbReference type="NCBIfam" id="TIGR00487">
    <property type="entry name" value="IF-2"/>
    <property type="match status" value="1"/>
</dbReference>
<dbReference type="NCBIfam" id="TIGR00231">
    <property type="entry name" value="small_GTP"/>
    <property type="match status" value="1"/>
</dbReference>
<dbReference type="PANTHER" id="PTHR43381:SF5">
    <property type="entry name" value="TR-TYPE G DOMAIN-CONTAINING PROTEIN"/>
    <property type="match status" value="1"/>
</dbReference>
<dbReference type="PANTHER" id="PTHR43381">
    <property type="entry name" value="TRANSLATION INITIATION FACTOR IF-2-RELATED"/>
    <property type="match status" value="1"/>
</dbReference>
<dbReference type="Pfam" id="PF22042">
    <property type="entry name" value="EF-G_D2"/>
    <property type="match status" value="1"/>
</dbReference>
<dbReference type="Pfam" id="PF00009">
    <property type="entry name" value="GTP_EFTU"/>
    <property type="match status" value="1"/>
</dbReference>
<dbReference type="Pfam" id="PF03144">
    <property type="entry name" value="GTP_EFTU_D2"/>
    <property type="match status" value="1"/>
</dbReference>
<dbReference type="Pfam" id="PF11987">
    <property type="entry name" value="IF-2"/>
    <property type="match status" value="1"/>
</dbReference>
<dbReference type="Pfam" id="PF08364">
    <property type="entry name" value="IF2_assoc"/>
    <property type="match status" value="1"/>
</dbReference>
<dbReference type="Pfam" id="PF04760">
    <property type="entry name" value="IF2_N"/>
    <property type="match status" value="2"/>
</dbReference>
<dbReference type="SUPFAM" id="SSF52156">
    <property type="entry name" value="Initiation factor IF2/eIF5b, domain 3"/>
    <property type="match status" value="1"/>
</dbReference>
<dbReference type="SUPFAM" id="SSF52540">
    <property type="entry name" value="P-loop containing nucleoside triphosphate hydrolases"/>
    <property type="match status" value="1"/>
</dbReference>
<dbReference type="SUPFAM" id="SSF46955">
    <property type="entry name" value="Putative DNA-binding domain"/>
    <property type="match status" value="1"/>
</dbReference>
<dbReference type="SUPFAM" id="SSF50447">
    <property type="entry name" value="Translation proteins"/>
    <property type="match status" value="2"/>
</dbReference>
<dbReference type="PROSITE" id="PS51722">
    <property type="entry name" value="G_TR_2"/>
    <property type="match status" value="1"/>
</dbReference>
<dbReference type="PROSITE" id="PS01176">
    <property type="entry name" value="IF2"/>
    <property type="match status" value="1"/>
</dbReference>
<protein>
    <recommendedName>
        <fullName evidence="2">Translation initiation factor IF-2</fullName>
    </recommendedName>
</protein>
<name>IF2_SHEPW</name>
<keyword id="KW-0963">Cytoplasm</keyword>
<keyword id="KW-0342">GTP-binding</keyword>
<keyword id="KW-0396">Initiation factor</keyword>
<keyword id="KW-0547">Nucleotide-binding</keyword>
<keyword id="KW-0648">Protein biosynthesis</keyword>
<sequence length="900" mass="96531">MADTTVDKLAKEVGKSADRLVEQFSQAGIKKSANDTVSESEKQQLLDFLKKQHGGDAAPQKMTLQRKSVSTLSVAGSGGQSKDVKVEVRKKRTFVKRDEAAEAELAAAAKAEEEAKAAAAKAEAEAKAKADAEAKQKADAEAKAKAEKAAKAKSEKQEAAPAQTADEKAAKDEADKLQAAKDEVAKAKADAEAAAATEEARRLAEENAKRWADEEKARKEAEKTGDHHVTTSTEARAAEDTADANAEKRGRRPRKPSANAGNNANSNSNAGSGRPGGKGKRGKDNRRDNRNSRNSRNARSVAPESMDQAFNKSAVVVKAEVSIGETVSVSELASKMSVKATEIIKQMMKMGSMVTINQVLDQETAQLVAEEMGHKVILTRENELEHQVLADRNGDVKVEPRAPVVTIMGHVDHGKTSLLDYIRRAKVASGEAGGITQHIGAYHVETGNGMITFLDTPGHAAFTAMRARGAKATDIVILVVAADDGVMPQTIEAIQHAKAGGVPLIVAVNKIDKPEADPERVKSELSQHGVMSEDWGGENMFVHVSAKSGEGIDELLEGILLESEVLELKAVREGMAAGVVVESKLDKGRGPVATVLVQEGTLKQGDIVLCGLEYGKVRAMKDENGKAITEAGPSIPVEILGLSGVPSAGDEATVVRDERKAREVALYRQGKFRDVKLARQQKSKLENMFANMVEGEVQELNLVLKADVQGSLEAIADSLNKLSTDEVKVNIIARGVGGLTETDATLAAASNAIMVGFNVRADAQARKVVDSESVDLRYYSIIYQLIDEVRDAMGGMLAPEFRQEIIGLAEVRDVFKSPKIGAIAGCMVTEGTIKRSAPIRVLRENVVIYEGELESLRRFKDDVSDVRNGMECGIGVKNYNDVRVGDQIEVFETVEIARTL</sequence>
<gene>
    <name evidence="2" type="primary">infB</name>
    <name type="ordered locus">swp_1218</name>
</gene>
<comment type="function">
    <text evidence="2">One of the essential components for the initiation of protein synthesis. Protects formylmethionyl-tRNA from spontaneous hydrolysis and promotes its binding to the 30S ribosomal subunits. Also involved in the hydrolysis of GTP during the formation of the 70S ribosomal complex.</text>
</comment>
<comment type="subcellular location">
    <subcellularLocation>
        <location evidence="2">Cytoplasm</location>
    </subcellularLocation>
</comment>
<comment type="similarity">
    <text evidence="2">Belongs to the TRAFAC class translation factor GTPase superfamily. Classic translation factor GTPase family. IF-2 subfamily.</text>
</comment>
<feature type="chain" id="PRO_1000117337" description="Translation initiation factor IF-2">
    <location>
        <begin position="1"/>
        <end position="900"/>
    </location>
</feature>
<feature type="domain" description="tr-type G">
    <location>
        <begin position="400"/>
        <end position="569"/>
    </location>
</feature>
<feature type="region of interest" description="Disordered" evidence="3">
    <location>
        <begin position="119"/>
        <end position="306"/>
    </location>
</feature>
<feature type="region of interest" description="G1" evidence="1">
    <location>
        <begin position="409"/>
        <end position="416"/>
    </location>
</feature>
<feature type="region of interest" description="G2" evidence="1">
    <location>
        <begin position="434"/>
        <end position="438"/>
    </location>
</feature>
<feature type="region of interest" description="G3" evidence="1">
    <location>
        <begin position="455"/>
        <end position="458"/>
    </location>
</feature>
<feature type="region of interest" description="G4" evidence="1">
    <location>
        <begin position="509"/>
        <end position="512"/>
    </location>
</feature>
<feature type="region of interest" description="G5" evidence="1">
    <location>
        <begin position="545"/>
        <end position="547"/>
    </location>
</feature>
<feature type="compositionally biased region" description="Basic and acidic residues" evidence="3">
    <location>
        <begin position="119"/>
        <end position="158"/>
    </location>
</feature>
<feature type="compositionally biased region" description="Basic and acidic residues" evidence="3">
    <location>
        <begin position="165"/>
        <end position="191"/>
    </location>
</feature>
<feature type="compositionally biased region" description="Basic and acidic residues" evidence="3">
    <location>
        <begin position="198"/>
        <end position="229"/>
    </location>
</feature>
<feature type="compositionally biased region" description="Low complexity" evidence="3">
    <location>
        <begin position="257"/>
        <end position="272"/>
    </location>
</feature>
<feature type="binding site" evidence="2">
    <location>
        <begin position="409"/>
        <end position="416"/>
    </location>
    <ligand>
        <name>GTP</name>
        <dbReference type="ChEBI" id="CHEBI:37565"/>
    </ligand>
</feature>
<feature type="binding site" evidence="2">
    <location>
        <begin position="455"/>
        <end position="459"/>
    </location>
    <ligand>
        <name>GTP</name>
        <dbReference type="ChEBI" id="CHEBI:37565"/>
    </ligand>
</feature>
<feature type="binding site" evidence="2">
    <location>
        <begin position="509"/>
        <end position="512"/>
    </location>
    <ligand>
        <name>GTP</name>
        <dbReference type="ChEBI" id="CHEBI:37565"/>
    </ligand>
</feature>